<proteinExistence type="inferred from homology"/>
<sequence>MADMKRLKHLMFSPFIDNNPIALQVLGICSALAVTTKLQTAIVMGISVALVTGFSSFFISLVRNYIPNSIRIIVQMAIIASLVTLVDQLLQAFAYELSKQLSVFVGLIITNCIVMGRAEAFAMKEPPLESLIDGIGNGAGYGIMLLVVATVRELIGSGKLLGYTVFQTVQDGGWYQTNGLFLLAPSAFFIIGFLIWGLRTWKPEQAEE</sequence>
<evidence type="ECO:0000255" key="1">
    <source>
        <dbReference type="HAMAP-Rule" id="MF_00428"/>
    </source>
</evidence>
<organism>
    <name type="scientific">Neisseria meningitidis serogroup B (strain ATCC BAA-335 / MC58)</name>
    <dbReference type="NCBI Taxonomy" id="122586"/>
    <lineage>
        <taxon>Bacteria</taxon>
        <taxon>Pseudomonadati</taxon>
        <taxon>Pseudomonadota</taxon>
        <taxon>Betaproteobacteria</taxon>
        <taxon>Neisseriales</taxon>
        <taxon>Neisseriaceae</taxon>
        <taxon>Neisseria</taxon>
    </lineage>
</organism>
<protein>
    <recommendedName>
        <fullName evidence="1">Na(+)-translocating NADH-quinone reductase subunit D</fullName>
        <shortName evidence="1">Na(+)-NQR subunit D</shortName>
        <shortName evidence="1">Na(+)-translocating NQR subunit D</shortName>
        <ecNumber evidence="1">7.2.1.1</ecNumber>
    </recommendedName>
    <alternativeName>
        <fullName evidence="1">NQR complex subunit D</fullName>
    </alternativeName>
    <alternativeName>
        <fullName evidence="1">NQR-1 subunit D</fullName>
    </alternativeName>
</protein>
<reference key="1">
    <citation type="journal article" date="2000" name="Science">
        <title>Complete genome sequence of Neisseria meningitidis serogroup B strain MC58.</title>
        <authorList>
            <person name="Tettelin H."/>
            <person name="Saunders N.J."/>
            <person name="Heidelberg J.F."/>
            <person name="Jeffries A.C."/>
            <person name="Nelson K.E."/>
            <person name="Eisen J.A."/>
            <person name="Ketchum K.A."/>
            <person name="Hood D.W."/>
            <person name="Peden J.F."/>
            <person name="Dodson R.J."/>
            <person name="Nelson W.C."/>
            <person name="Gwinn M.L."/>
            <person name="DeBoy R.T."/>
            <person name="Peterson J.D."/>
            <person name="Hickey E.K."/>
            <person name="Haft D.H."/>
            <person name="Salzberg S.L."/>
            <person name="White O."/>
            <person name="Fleischmann R.D."/>
            <person name="Dougherty B.A."/>
            <person name="Mason T.M."/>
            <person name="Ciecko A."/>
            <person name="Parksey D.S."/>
            <person name="Blair E."/>
            <person name="Cittone H."/>
            <person name="Clark E.B."/>
            <person name="Cotton M.D."/>
            <person name="Utterback T.R."/>
            <person name="Khouri H.M."/>
            <person name="Qin H."/>
            <person name="Vamathevan J.J."/>
            <person name="Gill J."/>
            <person name="Scarlato V."/>
            <person name="Masignani V."/>
            <person name="Pizza M."/>
            <person name="Grandi G."/>
            <person name="Sun L."/>
            <person name="Smith H.O."/>
            <person name="Fraser C.M."/>
            <person name="Moxon E.R."/>
            <person name="Rappuoli R."/>
            <person name="Venter J.C."/>
        </authorList>
    </citation>
    <scope>NUCLEOTIDE SEQUENCE [LARGE SCALE GENOMIC DNA]</scope>
    <source>
        <strain>ATCC BAA-335 / MC58</strain>
    </source>
</reference>
<dbReference type="EC" id="7.2.1.1" evidence="1"/>
<dbReference type="EMBL" id="AE002098">
    <property type="protein sequence ID" value="AAF40994.1"/>
    <property type="molecule type" value="Genomic_DNA"/>
</dbReference>
<dbReference type="PIR" id="A81185">
    <property type="entry name" value="A81185"/>
</dbReference>
<dbReference type="RefSeq" id="NP_273610.1">
    <property type="nucleotide sequence ID" value="NC_003112.2"/>
</dbReference>
<dbReference type="RefSeq" id="WP_002221365.1">
    <property type="nucleotide sequence ID" value="NC_003112.2"/>
</dbReference>
<dbReference type="SMR" id="Q9K0M6"/>
<dbReference type="FunCoup" id="Q9K0M6">
    <property type="interactions" value="74"/>
</dbReference>
<dbReference type="STRING" id="122586.NMB0566"/>
<dbReference type="PaxDb" id="122586-NMB0566"/>
<dbReference type="KEGG" id="nme:NMB0566"/>
<dbReference type="PATRIC" id="fig|122586.8.peg.725"/>
<dbReference type="HOGENOM" id="CLU_046659_1_1_4"/>
<dbReference type="InParanoid" id="Q9K0M6"/>
<dbReference type="OrthoDB" id="9782945at2"/>
<dbReference type="Proteomes" id="UP000000425">
    <property type="component" value="Chromosome"/>
</dbReference>
<dbReference type="GO" id="GO:0005886">
    <property type="term" value="C:plasma membrane"/>
    <property type="evidence" value="ECO:0000318"/>
    <property type="project" value="GO_Central"/>
</dbReference>
<dbReference type="GO" id="GO:0016655">
    <property type="term" value="F:oxidoreductase activity, acting on NAD(P)H, quinone or similar compound as acceptor"/>
    <property type="evidence" value="ECO:0007669"/>
    <property type="project" value="UniProtKB-UniRule"/>
</dbReference>
<dbReference type="GO" id="GO:0006814">
    <property type="term" value="P:sodium ion transport"/>
    <property type="evidence" value="ECO:0007669"/>
    <property type="project" value="UniProtKB-UniRule"/>
</dbReference>
<dbReference type="HAMAP" id="MF_00428">
    <property type="entry name" value="NqrD"/>
    <property type="match status" value="1"/>
</dbReference>
<dbReference type="InterPro" id="IPR011292">
    <property type="entry name" value="NqrD"/>
</dbReference>
<dbReference type="InterPro" id="IPR003667">
    <property type="entry name" value="NqrDE/RnfAE"/>
</dbReference>
<dbReference type="NCBIfam" id="TIGR01939">
    <property type="entry name" value="nqrD"/>
    <property type="match status" value="1"/>
</dbReference>
<dbReference type="NCBIfam" id="NF006777">
    <property type="entry name" value="PRK09292.1"/>
    <property type="match status" value="1"/>
</dbReference>
<dbReference type="NCBIfam" id="NF009070">
    <property type="entry name" value="PRK12405.1"/>
    <property type="match status" value="1"/>
</dbReference>
<dbReference type="PANTHER" id="PTHR30586">
    <property type="entry name" value="ELECTRON TRANSPORT COMPLEX PROTEIN RNFE"/>
    <property type="match status" value="1"/>
</dbReference>
<dbReference type="PANTHER" id="PTHR30586:SF1">
    <property type="entry name" value="NA(+)-TRANSLOCATING NADH-QUINONE REDUCTASE SUBUNIT D"/>
    <property type="match status" value="1"/>
</dbReference>
<dbReference type="Pfam" id="PF02508">
    <property type="entry name" value="Rnf-Nqr"/>
    <property type="match status" value="1"/>
</dbReference>
<dbReference type="PIRSF" id="PIRSF006102">
    <property type="entry name" value="NQR_DE"/>
    <property type="match status" value="1"/>
</dbReference>
<gene>
    <name evidence="1" type="primary">nqrD</name>
    <name type="ordered locus">NMB0566</name>
</gene>
<feature type="chain" id="PRO_0000214236" description="Na(+)-translocating NADH-quinone reductase subunit D">
    <location>
        <begin position="1"/>
        <end position="208"/>
    </location>
</feature>
<feature type="transmembrane region" description="Helical" evidence="1">
    <location>
        <begin position="42"/>
        <end position="62"/>
    </location>
</feature>
<feature type="transmembrane region" description="Helical" evidence="1">
    <location>
        <begin position="72"/>
        <end position="92"/>
    </location>
</feature>
<feature type="transmembrane region" description="Helical" evidence="1">
    <location>
        <begin position="103"/>
        <end position="123"/>
    </location>
</feature>
<feature type="transmembrane region" description="Helical" evidence="1">
    <location>
        <begin position="131"/>
        <end position="151"/>
    </location>
</feature>
<feature type="transmembrane region" description="Helical" evidence="1">
    <location>
        <begin position="178"/>
        <end position="198"/>
    </location>
</feature>
<name>NQRD_NEIMB</name>
<keyword id="KW-0997">Cell inner membrane</keyword>
<keyword id="KW-1003">Cell membrane</keyword>
<keyword id="KW-0406">Ion transport</keyword>
<keyword id="KW-0472">Membrane</keyword>
<keyword id="KW-0520">NAD</keyword>
<keyword id="KW-1185">Reference proteome</keyword>
<keyword id="KW-0915">Sodium</keyword>
<keyword id="KW-0739">Sodium transport</keyword>
<keyword id="KW-1278">Translocase</keyword>
<keyword id="KW-0812">Transmembrane</keyword>
<keyword id="KW-1133">Transmembrane helix</keyword>
<keyword id="KW-0813">Transport</keyword>
<keyword id="KW-0830">Ubiquinone</keyword>
<comment type="function">
    <text evidence="1">NQR complex catalyzes the reduction of ubiquinone-1 to ubiquinol by two successive reactions, coupled with the transport of Na(+) ions from the cytoplasm to the periplasm. NqrA to NqrE are probably involved in the second step, the conversion of ubisemiquinone to ubiquinol.</text>
</comment>
<comment type="catalytic activity">
    <reaction evidence="1">
        <text>a ubiquinone + n Na(+)(in) + NADH + H(+) = a ubiquinol + n Na(+)(out) + NAD(+)</text>
        <dbReference type="Rhea" id="RHEA:47748"/>
        <dbReference type="Rhea" id="RHEA-COMP:9565"/>
        <dbReference type="Rhea" id="RHEA-COMP:9566"/>
        <dbReference type="ChEBI" id="CHEBI:15378"/>
        <dbReference type="ChEBI" id="CHEBI:16389"/>
        <dbReference type="ChEBI" id="CHEBI:17976"/>
        <dbReference type="ChEBI" id="CHEBI:29101"/>
        <dbReference type="ChEBI" id="CHEBI:57540"/>
        <dbReference type="ChEBI" id="CHEBI:57945"/>
        <dbReference type="EC" id="7.2.1.1"/>
    </reaction>
</comment>
<comment type="subunit">
    <text evidence="1">Composed of six subunits; NqrA, NqrB, NqrC, NqrD, NqrE and NqrF.</text>
</comment>
<comment type="subcellular location">
    <subcellularLocation>
        <location evidence="1">Cell inner membrane</location>
        <topology evidence="1">Multi-pass membrane protein</topology>
    </subcellularLocation>
</comment>
<comment type="similarity">
    <text evidence="1">Belongs to the NqrDE/RnfAE family.</text>
</comment>
<accession>Q9K0M6</accession>